<evidence type="ECO:0000250" key="1"/>
<evidence type="ECO:0000255" key="2"/>
<evidence type="ECO:0000305" key="3"/>
<proteinExistence type="inferred from homology"/>
<organism>
    <name type="scientific">Pseudomonas aeruginosa (strain ATCC 15692 / DSM 22644 / CIP 104116 / JCM 14847 / LMG 12228 / 1C / PRS 101 / PAO1)</name>
    <dbReference type="NCBI Taxonomy" id="208964"/>
    <lineage>
        <taxon>Bacteria</taxon>
        <taxon>Pseudomonadati</taxon>
        <taxon>Pseudomonadota</taxon>
        <taxon>Gammaproteobacteria</taxon>
        <taxon>Pseudomonadales</taxon>
        <taxon>Pseudomonadaceae</taxon>
        <taxon>Pseudomonas</taxon>
    </lineage>
</organism>
<comment type="function">
    <text evidence="1">Transports 4-hydroxybenzoate (4-HBA) and protocatechuate across the membrane. Driven by the proton motive force. Also functions as a chemoreceptor, which is required for chemotaxis to aromatic acids (By similarity).</text>
</comment>
<comment type="subcellular location">
    <subcellularLocation>
        <location evidence="1">Cell inner membrane</location>
        <topology evidence="1">Multi-pass membrane protein</topology>
    </subcellularLocation>
</comment>
<comment type="similarity">
    <text evidence="3">Belongs to the major facilitator superfamily. Aromatic acid:H(+) symporter (AAHS) (TC 2.A.1.15) family.</text>
</comment>
<gene>
    <name type="primary">pcaK</name>
    <name type="ordered locus">PA0235</name>
</gene>
<keyword id="KW-0997">Cell inner membrane</keyword>
<keyword id="KW-1003">Cell membrane</keyword>
<keyword id="KW-0145">Chemotaxis</keyword>
<keyword id="KW-0472">Membrane</keyword>
<keyword id="KW-1185">Reference proteome</keyword>
<keyword id="KW-0812">Transmembrane</keyword>
<keyword id="KW-1133">Transmembrane helix</keyword>
<keyword id="KW-0813">Transport</keyword>
<accession>Q9I6Q3</accession>
<feature type="chain" id="PRO_0000287817" description="4-hydroxybenzoate transporter PcaK">
    <location>
        <begin position="1"/>
        <end position="448"/>
    </location>
</feature>
<feature type="topological domain" description="Cytoplasmic" evidence="2">
    <location>
        <begin position="1"/>
        <end position="30"/>
    </location>
</feature>
<feature type="transmembrane region" description="Helical; Name=1" evidence="2">
    <location>
        <begin position="31"/>
        <end position="51"/>
    </location>
</feature>
<feature type="topological domain" description="Periplasmic" evidence="2">
    <location>
        <begin position="52"/>
        <end position="67"/>
    </location>
</feature>
<feature type="transmembrane region" description="Helical; Name=2" evidence="2">
    <location>
        <begin position="68"/>
        <end position="88"/>
    </location>
</feature>
<feature type="topological domain" description="Cytoplasmic" evidence="2">
    <location>
        <begin position="89"/>
        <end position="94"/>
    </location>
</feature>
<feature type="transmembrane region" description="Helical; Name=3" evidence="2">
    <location>
        <begin position="95"/>
        <end position="115"/>
    </location>
</feature>
<feature type="topological domain" description="Periplasmic" evidence="2">
    <location>
        <begin position="116"/>
        <end position="119"/>
    </location>
</feature>
<feature type="transmembrane region" description="Helical; Name=4" evidence="2">
    <location>
        <begin position="120"/>
        <end position="140"/>
    </location>
</feature>
<feature type="topological domain" description="Cytoplasmic" evidence="2">
    <location>
        <begin position="141"/>
        <end position="152"/>
    </location>
</feature>
<feature type="transmembrane region" description="Helical; Name=5" evidence="2">
    <location>
        <begin position="153"/>
        <end position="173"/>
    </location>
</feature>
<feature type="topological domain" description="Periplasmic" evidence="2">
    <location>
        <begin position="174"/>
        <end position="184"/>
    </location>
</feature>
<feature type="transmembrane region" description="Helical; Name=6" evidence="2">
    <location>
        <begin position="185"/>
        <end position="205"/>
    </location>
</feature>
<feature type="topological domain" description="Cytoplasmic" evidence="2">
    <location>
        <begin position="206"/>
        <end position="261"/>
    </location>
</feature>
<feature type="transmembrane region" description="Helical; Name=7" evidence="2">
    <location>
        <begin position="262"/>
        <end position="282"/>
    </location>
</feature>
<feature type="topological domain" description="Periplasmic" evidence="2">
    <location>
        <begin position="283"/>
        <end position="301"/>
    </location>
</feature>
<feature type="transmembrane region" description="Helical; Name=8" evidence="2">
    <location>
        <begin position="302"/>
        <end position="322"/>
    </location>
</feature>
<feature type="topological domain" description="Cytoplasmic" evidence="2">
    <location>
        <begin position="323"/>
        <end position="329"/>
    </location>
</feature>
<feature type="transmembrane region" description="Helical; Name=9" evidence="2">
    <location>
        <begin position="330"/>
        <end position="350"/>
    </location>
</feature>
<feature type="topological domain" description="Periplasmic" evidence="2">
    <location>
        <position position="351"/>
    </location>
</feature>
<feature type="transmembrane region" description="Helical; Name=10" evidence="2">
    <location>
        <begin position="352"/>
        <end position="372"/>
    </location>
</feature>
<feature type="topological domain" description="Cytoplasmic" evidence="2">
    <location>
        <begin position="373"/>
        <end position="398"/>
    </location>
</feature>
<feature type="transmembrane region" description="Helical; Name=11" evidence="2">
    <location>
        <begin position="399"/>
        <end position="419"/>
    </location>
</feature>
<feature type="topological domain" description="Periplasmic" evidence="2">
    <location>
        <begin position="420"/>
        <end position="421"/>
    </location>
</feature>
<feature type="transmembrane region" description="Helical; Name=12" evidence="2">
    <location>
        <begin position="422"/>
        <end position="442"/>
    </location>
</feature>
<feature type="topological domain" description="Cytoplasmic" evidence="2">
    <location>
        <begin position="443"/>
        <end position="448"/>
    </location>
</feature>
<protein>
    <recommendedName>
        <fullName>4-hydroxybenzoate transporter PcaK</fullName>
    </recommendedName>
</protein>
<sequence>MNSPSLPAVERLDVQAFINAQPLSPYQWRIVLLCFLIVFLDGLDTAAMGFIAPALTQDWGIDRASLGPVMSAALIGMVFGALGSGPLADRYGRKLVLVAAVFLFGLFSLASAYSTNVEQLLALRFLTGLGLGAAMPNATTLLSEYTPERLKSLLVTSMFCGFNLGMACGGFVSAKLIPLFGWHSLLLLGGLLPLVLAVVLLFRLPESARYLVVRNRGSERVRQVLAPIAPAQVALARSFHVPEQQTVQARNVFAVIFSGTYSAGTLLLWLTYFMGLVIVYLLTSWLPTLMRDSGASLEQAAFIGALFQFGGVLSAVAVGWAMDRFNPHKVIGLFYLLAGVFAWCVGQSLGQVTLLATLVLLAGMCINGAQSAMPSLAARFYPTQGRATGVSWMLGIGRFGAILGAWIGATLLGLGWNFEQVLTALVLPAALATAAVLLKGLVSHADAG</sequence>
<dbReference type="EMBL" id="AE004091">
    <property type="protein sequence ID" value="AAG03624.1"/>
    <property type="molecule type" value="Genomic_DNA"/>
</dbReference>
<dbReference type="PIR" id="G83616">
    <property type="entry name" value="G83616"/>
</dbReference>
<dbReference type="RefSeq" id="NP_248926.1">
    <property type="nucleotide sequence ID" value="NC_002516.2"/>
</dbReference>
<dbReference type="RefSeq" id="WP_003101875.1">
    <property type="nucleotide sequence ID" value="NZ_QZGE01000024.1"/>
</dbReference>
<dbReference type="SMR" id="Q9I6Q3"/>
<dbReference type="FunCoup" id="Q9I6Q3">
    <property type="interactions" value="79"/>
</dbReference>
<dbReference type="STRING" id="208964.PA0235"/>
<dbReference type="PaxDb" id="208964-PA0235"/>
<dbReference type="GeneID" id="881907"/>
<dbReference type="KEGG" id="pae:PA0235"/>
<dbReference type="PATRIC" id="fig|208964.12.peg.245"/>
<dbReference type="PseudoCAP" id="PA0235"/>
<dbReference type="HOGENOM" id="CLU_001265_46_4_6"/>
<dbReference type="InParanoid" id="Q9I6Q3"/>
<dbReference type="OrthoDB" id="7066727at2"/>
<dbReference type="PhylomeDB" id="Q9I6Q3"/>
<dbReference type="BioCyc" id="PAER208964:G1FZ6-237-MONOMER"/>
<dbReference type="Proteomes" id="UP000002438">
    <property type="component" value="Chromosome"/>
</dbReference>
<dbReference type="GO" id="GO:0005886">
    <property type="term" value="C:plasma membrane"/>
    <property type="evidence" value="ECO:0007669"/>
    <property type="project" value="UniProtKB-SubCell"/>
</dbReference>
<dbReference type="GO" id="GO:0022857">
    <property type="term" value="F:transmembrane transporter activity"/>
    <property type="evidence" value="ECO:0007669"/>
    <property type="project" value="InterPro"/>
</dbReference>
<dbReference type="GO" id="GO:0006935">
    <property type="term" value="P:chemotaxis"/>
    <property type="evidence" value="ECO:0007669"/>
    <property type="project" value="UniProtKB-KW"/>
</dbReference>
<dbReference type="CDD" id="cd17365">
    <property type="entry name" value="MFS_PcaK_like"/>
    <property type="match status" value="1"/>
</dbReference>
<dbReference type="Gene3D" id="1.20.1250.20">
    <property type="entry name" value="MFS general substrate transporter like domains"/>
    <property type="match status" value="2"/>
</dbReference>
<dbReference type="InterPro" id="IPR011701">
    <property type="entry name" value="MFS"/>
</dbReference>
<dbReference type="InterPro" id="IPR004746">
    <property type="entry name" value="MFS_AAHS"/>
</dbReference>
<dbReference type="InterPro" id="IPR020846">
    <property type="entry name" value="MFS_dom"/>
</dbReference>
<dbReference type="InterPro" id="IPR036259">
    <property type="entry name" value="MFS_trans_sf"/>
</dbReference>
<dbReference type="InterPro" id="IPR005829">
    <property type="entry name" value="Sugar_transporter_CS"/>
</dbReference>
<dbReference type="NCBIfam" id="TIGR00895">
    <property type="entry name" value="2A0115"/>
    <property type="match status" value="1"/>
</dbReference>
<dbReference type="PANTHER" id="PTHR23508">
    <property type="entry name" value="CARBOXYLIC ACID TRANSPORTER PROTEIN HOMOLOG"/>
    <property type="match status" value="1"/>
</dbReference>
<dbReference type="PANTHER" id="PTHR23508:SF10">
    <property type="entry name" value="CARBOXYLIC ACID TRANSPORTER PROTEIN HOMOLOG"/>
    <property type="match status" value="1"/>
</dbReference>
<dbReference type="Pfam" id="PF07690">
    <property type="entry name" value="MFS_1"/>
    <property type="match status" value="1"/>
</dbReference>
<dbReference type="SUPFAM" id="SSF103473">
    <property type="entry name" value="MFS general substrate transporter"/>
    <property type="match status" value="1"/>
</dbReference>
<dbReference type="PROSITE" id="PS50850">
    <property type="entry name" value="MFS"/>
    <property type="match status" value="1"/>
</dbReference>
<name>PCAK_PSEAE</name>
<reference key="1">
    <citation type="journal article" date="2000" name="Nature">
        <title>Complete genome sequence of Pseudomonas aeruginosa PAO1, an opportunistic pathogen.</title>
        <authorList>
            <person name="Stover C.K."/>
            <person name="Pham X.-Q.T."/>
            <person name="Erwin A.L."/>
            <person name="Mizoguchi S.D."/>
            <person name="Warrener P."/>
            <person name="Hickey M.J."/>
            <person name="Brinkman F.S.L."/>
            <person name="Hufnagle W.O."/>
            <person name="Kowalik D.J."/>
            <person name="Lagrou M."/>
            <person name="Garber R.L."/>
            <person name="Goltry L."/>
            <person name="Tolentino E."/>
            <person name="Westbrock-Wadman S."/>
            <person name="Yuan Y."/>
            <person name="Brody L.L."/>
            <person name="Coulter S.N."/>
            <person name="Folger K.R."/>
            <person name="Kas A."/>
            <person name="Larbig K."/>
            <person name="Lim R.M."/>
            <person name="Smith K.A."/>
            <person name="Spencer D.H."/>
            <person name="Wong G.K.-S."/>
            <person name="Wu Z."/>
            <person name="Paulsen I.T."/>
            <person name="Reizer J."/>
            <person name="Saier M.H. Jr."/>
            <person name="Hancock R.E.W."/>
            <person name="Lory S."/>
            <person name="Olson M.V."/>
        </authorList>
    </citation>
    <scope>NUCLEOTIDE SEQUENCE [LARGE SCALE GENOMIC DNA]</scope>
    <source>
        <strain>ATCC 15692 / DSM 22644 / CIP 104116 / JCM 14847 / LMG 12228 / 1C / PRS 101 / PAO1</strain>
    </source>
</reference>